<name>RIMM_STRZP</name>
<proteinExistence type="inferred from homology"/>
<dbReference type="EMBL" id="CP000920">
    <property type="protein sequence ID" value="ACO20382.1"/>
    <property type="molecule type" value="Genomic_DNA"/>
</dbReference>
<dbReference type="RefSeq" id="WP_001105899.1">
    <property type="nucleotide sequence ID" value="NC_012467.1"/>
</dbReference>
<dbReference type="SMR" id="C1CJM4"/>
<dbReference type="GeneID" id="45653851"/>
<dbReference type="KEGG" id="spp:SPP_0786"/>
<dbReference type="HOGENOM" id="CLU_077636_3_1_9"/>
<dbReference type="GO" id="GO:0005737">
    <property type="term" value="C:cytoplasm"/>
    <property type="evidence" value="ECO:0007669"/>
    <property type="project" value="UniProtKB-SubCell"/>
</dbReference>
<dbReference type="GO" id="GO:0005840">
    <property type="term" value="C:ribosome"/>
    <property type="evidence" value="ECO:0007669"/>
    <property type="project" value="InterPro"/>
</dbReference>
<dbReference type="GO" id="GO:0043022">
    <property type="term" value="F:ribosome binding"/>
    <property type="evidence" value="ECO:0007669"/>
    <property type="project" value="InterPro"/>
</dbReference>
<dbReference type="GO" id="GO:0042274">
    <property type="term" value="P:ribosomal small subunit biogenesis"/>
    <property type="evidence" value="ECO:0007669"/>
    <property type="project" value="UniProtKB-UniRule"/>
</dbReference>
<dbReference type="GO" id="GO:0006364">
    <property type="term" value="P:rRNA processing"/>
    <property type="evidence" value="ECO:0007669"/>
    <property type="project" value="UniProtKB-UniRule"/>
</dbReference>
<dbReference type="Gene3D" id="2.30.30.240">
    <property type="entry name" value="PRC-barrel domain"/>
    <property type="match status" value="1"/>
</dbReference>
<dbReference type="Gene3D" id="2.40.30.60">
    <property type="entry name" value="RimM"/>
    <property type="match status" value="1"/>
</dbReference>
<dbReference type="HAMAP" id="MF_00014">
    <property type="entry name" value="Ribosome_mat_RimM"/>
    <property type="match status" value="1"/>
</dbReference>
<dbReference type="InterPro" id="IPR027275">
    <property type="entry name" value="PRC-brl_dom"/>
</dbReference>
<dbReference type="InterPro" id="IPR011033">
    <property type="entry name" value="PRC_barrel-like_sf"/>
</dbReference>
<dbReference type="InterPro" id="IPR011961">
    <property type="entry name" value="RimM"/>
</dbReference>
<dbReference type="InterPro" id="IPR002676">
    <property type="entry name" value="RimM_N"/>
</dbReference>
<dbReference type="InterPro" id="IPR036976">
    <property type="entry name" value="RimM_N_sf"/>
</dbReference>
<dbReference type="InterPro" id="IPR009000">
    <property type="entry name" value="Transl_B-barrel_sf"/>
</dbReference>
<dbReference type="NCBIfam" id="TIGR02273">
    <property type="entry name" value="16S_RimM"/>
    <property type="match status" value="1"/>
</dbReference>
<dbReference type="PANTHER" id="PTHR33692">
    <property type="entry name" value="RIBOSOME MATURATION FACTOR RIMM"/>
    <property type="match status" value="1"/>
</dbReference>
<dbReference type="PANTHER" id="PTHR33692:SF1">
    <property type="entry name" value="RIBOSOME MATURATION FACTOR RIMM"/>
    <property type="match status" value="1"/>
</dbReference>
<dbReference type="Pfam" id="PF05239">
    <property type="entry name" value="PRC"/>
    <property type="match status" value="1"/>
</dbReference>
<dbReference type="Pfam" id="PF01782">
    <property type="entry name" value="RimM"/>
    <property type="match status" value="1"/>
</dbReference>
<dbReference type="SUPFAM" id="SSF50346">
    <property type="entry name" value="PRC-barrel domain"/>
    <property type="match status" value="1"/>
</dbReference>
<dbReference type="SUPFAM" id="SSF50447">
    <property type="entry name" value="Translation proteins"/>
    <property type="match status" value="1"/>
</dbReference>
<keyword id="KW-0143">Chaperone</keyword>
<keyword id="KW-0963">Cytoplasm</keyword>
<keyword id="KW-0690">Ribosome biogenesis</keyword>
<keyword id="KW-0698">rRNA processing</keyword>
<protein>
    <recommendedName>
        <fullName evidence="1">Ribosome maturation factor RimM</fullName>
    </recommendedName>
</protein>
<evidence type="ECO:0000255" key="1">
    <source>
        <dbReference type="HAMAP-Rule" id="MF_00014"/>
    </source>
</evidence>
<organism>
    <name type="scientific">Streptococcus pneumoniae (strain P1031)</name>
    <dbReference type="NCBI Taxonomy" id="488223"/>
    <lineage>
        <taxon>Bacteria</taxon>
        <taxon>Bacillati</taxon>
        <taxon>Bacillota</taxon>
        <taxon>Bacilli</taxon>
        <taxon>Lactobacillales</taxon>
        <taxon>Streptococcaceae</taxon>
        <taxon>Streptococcus</taxon>
    </lineage>
</organism>
<comment type="function">
    <text evidence="1">An accessory protein needed during the final step in the assembly of 30S ribosomal subunit, possibly for assembly of the head region. Essential for efficient processing of 16S rRNA. May be needed both before and after RbfA during the maturation of 16S rRNA. It has affinity for free ribosomal 30S subunits but not for 70S ribosomes.</text>
</comment>
<comment type="subunit">
    <text evidence="1">Binds ribosomal protein uS19.</text>
</comment>
<comment type="subcellular location">
    <subcellularLocation>
        <location evidence="1">Cytoplasm</location>
    </subcellularLocation>
</comment>
<comment type="domain">
    <text evidence="1">The PRC barrel domain binds ribosomal protein uS19.</text>
</comment>
<comment type="similarity">
    <text evidence="1">Belongs to the RimM family.</text>
</comment>
<gene>
    <name evidence="1" type="primary">rimM</name>
    <name type="ordered locus">SPP_0786</name>
</gene>
<sequence length="172" mass="19817">MNYFNVGKIVNTQGLQGEMRVLSVTDFAEERFKKGAELALFDEKDQFVQTVTIASHRKQKNFDIIKFKDMYHINTIEKYKGYSLKVAEEDLNDLDDGEFYYHEIIGLEVYEGDSLVGTIKEILQPGANDVWVVKRKGKRDLLLPYIPPVVLNVDIPNKRVDVEILEGLDDED</sequence>
<reference key="1">
    <citation type="journal article" date="2010" name="Genome Biol.">
        <title>Structure and dynamics of the pan-genome of Streptococcus pneumoniae and closely related species.</title>
        <authorList>
            <person name="Donati C."/>
            <person name="Hiller N.L."/>
            <person name="Tettelin H."/>
            <person name="Muzzi A."/>
            <person name="Croucher N.J."/>
            <person name="Angiuoli S.V."/>
            <person name="Oggioni M."/>
            <person name="Dunning Hotopp J.C."/>
            <person name="Hu F.Z."/>
            <person name="Riley D.R."/>
            <person name="Covacci A."/>
            <person name="Mitchell T.J."/>
            <person name="Bentley S.D."/>
            <person name="Kilian M."/>
            <person name="Ehrlich G.D."/>
            <person name="Rappuoli R."/>
            <person name="Moxon E.R."/>
            <person name="Masignani V."/>
        </authorList>
    </citation>
    <scope>NUCLEOTIDE SEQUENCE [LARGE SCALE GENOMIC DNA]</scope>
    <source>
        <strain>P1031</strain>
    </source>
</reference>
<feature type="chain" id="PRO_1000116585" description="Ribosome maturation factor RimM">
    <location>
        <begin position="1"/>
        <end position="172"/>
    </location>
</feature>
<feature type="domain" description="PRC barrel" evidence="1">
    <location>
        <begin position="95"/>
        <end position="168"/>
    </location>
</feature>
<accession>C1CJM4</accession>